<organism>
    <name type="scientific">Lactococcus lactis subsp. cremoris (strain MG1363)</name>
    <dbReference type="NCBI Taxonomy" id="416870"/>
    <lineage>
        <taxon>Bacteria</taxon>
        <taxon>Bacillati</taxon>
        <taxon>Bacillota</taxon>
        <taxon>Bacilli</taxon>
        <taxon>Lactobacillales</taxon>
        <taxon>Streptococcaceae</taxon>
        <taxon>Lactococcus</taxon>
        <taxon>Lactococcus cremoris subsp. cremoris</taxon>
    </lineage>
</organism>
<protein>
    <recommendedName>
        <fullName evidence="1">Peptide methionine sulfoxide reductase MsrB</fullName>
        <ecNumber evidence="1">1.8.4.12</ecNumber>
    </recommendedName>
    <alternativeName>
        <fullName evidence="1">Peptide-methionine (R)-S-oxide reductase</fullName>
    </alternativeName>
</protein>
<keyword id="KW-0560">Oxidoreductase</keyword>
<dbReference type="EC" id="1.8.4.12" evidence="1"/>
<dbReference type="EMBL" id="AM406671">
    <property type="protein sequence ID" value="CAL96807.1"/>
    <property type="molecule type" value="Genomic_DNA"/>
</dbReference>
<dbReference type="RefSeq" id="WP_011834286.1">
    <property type="nucleotide sequence ID" value="NC_009004.1"/>
</dbReference>
<dbReference type="SMR" id="A2RHS0"/>
<dbReference type="STRING" id="416870.llmg_0201"/>
<dbReference type="KEGG" id="llm:llmg_0201"/>
<dbReference type="eggNOG" id="COG0229">
    <property type="taxonomic scope" value="Bacteria"/>
</dbReference>
<dbReference type="HOGENOM" id="CLU_031040_8_5_9"/>
<dbReference type="OrthoDB" id="4174719at2"/>
<dbReference type="PhylomeDB" id="A2RHS0"/>
<dbReference type="Proteomes" id="UP000000364">
    <property type="component" value="Chromosome"/>
</dbReference>
<dbReference type="GO" id="GO:0005737">
    <property type="term" value="C:cytoplasm"/>
    <property type="evidence" value="ECO:0007669"/>
    <property type="project" value="TreeGrafter"/>
</dbReference>
<dbReference type="GO" id="GO:0033743">
    <property type="term" value="F:peptide-methionine (R)-S-oxide reductase activity"/>
    <property type="evidence" value="ECO:0007669"/>
    <property type="project" value="UniProtKB-UniRule"/>
</dbReference>
<dbReference type="GO" id="GO:0030091">
    <property type="term" value="P:protein repair"/>
    <property type="evidence" value="ECO:0007669"/>
    <property type="project" value="InterPro"/>
</dbReference>
<dbReference type="GO" id="GO:0006979">
    <property type="term" value="P:response to oxidative stress"/>
    <property type="evidence" value="ECO:0007669"/>
    <property type="project" value="InterPro"/>
</dbReference>
<dbReference type="FunFam" id="2.170.150.20:FF:000003">
    <property type="entry name" value="Peptide methionine sulfoxide reductase MsrB"/>
    <property type="match status" value="1"/>
</dbReference>
<dbReference type="Gene3D" id="2.170.150.20">
    <property type="entry name" value="Peptide methionine sulfoxide reductase"/>
    <property type="match status" value="1"/>
</dbReference>
<dbReference type="HAMAP" id="MF_01400">
    <property type="entry name" value="MsrB"/>
    <property type="match status" value="1"/>
</dbReference>
<dbReference type="InterPro" id="IPR028427">
    <property type="entry name" value="Met_Sox_Rdtase_MsrB"/>
</dbReference>
<dbReference type="InterPro" id="IPR002579">
    <property type="entry name" value="Met_Sox_Rdtase_MsrB_dom"/>
</dbReference>
<dbReference type="InterPro" id="IPR011057">
    <property type="entry name" value="Mss4-like_sf"/>
</dbReference>
<dbReference type="NCBIfam" id="TIGR00357">
    <property type="entry name" value="peptide-methionine (R)-S-oxide reductase MsrB"/>
    <property type="match status" value="1"/>
</dbReference>
<dbReference type="PANTHER" id="PTHR10173">
    <property type="entry name" value="METHIONINE SULFOXIDE REDUCTASE"/>
    <property type="match status" value="1"/>
</dbReference>
<dbReference type="PANTHER" id="PTHR10173:SF59">
    <property type="entry name" value="PEPTIDE METHIONINE SULFOXIDE REDUCTASE MSRA_MSRB"/>
    <property type="match status" value="1"/>
</dbReference>
<dbReference type="Pfam" id="PF01641">
    <property type="entry name" value="SelR"/>
    <property type="match status" value="1"/>
</dbReference>
<dbReference type="SUPFAM" id="SSF51316">
    <property type="entry name" value="Mss4-like"/>
    <property type="match status" value="1"/>
</dbReference>
<dbReference type="PROSITE" id="PS51790">
    <property type="entry name" value="MSRB"/>
    <property type="match status" value="1"/>
</dbReference>
<sequence>MKKEELKKKLSPLAYRVTQENGTEARFTNEFDDFFEKGLYVDIVSGEPLFTSLDKYQSGCGWPAFTQPIDKKVVKEKRDKSLFMERTEVRSSNADSHLGHVFTDGPLDKGGLRYCINSAALRFIPFDQLESEGYGDYIKYFS</sequence>
<proteinExistence type="inferred from homology"/>
<comment type="catalytic activity">
    <reaction evidence="1">
        <text>L-methionyl-[protein] + [thioredoxin]-disulfide + H2O = L-methionyl-(R)-S-oxide-[protein] + [thioredoxin]-dithiol</text>
        <dbReference type="Rhea" id="RHEA:24164"/>
        <dbReference type="Rhea" id="RHEA-COMP:10698"/>
        <dbReference type="Rhea" id="RHEA-COMP:10700"/>
        <dbReference type="Rhea" id="RHEA-COMP:12313"/>
        <dbReference type="Rhea" id="RHEA-COMP:12314"/>
        <dbReference type="ChEBI" id="CHEBI:15377"/>
        <dbReference type="ChEBI" id="CHEBI:16044"/>
        <dbReference type="ChEBI" id="CHEBI:29950"/>
        <dbReference type="ChEBI" id="CHEBI:45764"/>
        <dbReference type="ChEBI" id="CHEBI:50058"/>
        <dbReference type="EC" id="1.8.4.12"/>
    </reaction>
</comment>
<comment type="similarity">
    <text evidence="1">Belongs to the MsrB Met sulfoxide reductase family.</text>
</comment>
<feature type="chain" id="PRO_1000068274" description="Peptide methionine sulfoxide reductase MsrB">
    <location>
        <begin position="1"/>
        <end position="142"/>
    </location>
</feature>
<feature type="domain" description="MsrB" evidence="2">
    <location>
        <begin position="3"/>
        <end position="126"/>
    </location>
</feature>
<feature type="active site" description="Nucleophile" evidence="2">
    <location>
        <position position="115"/>
    </location>
</feature>
<evidence type="ECO:0000255" key="1">
    <source>
        <dbReference type="HAMAP-Rule" id="MF_01400"/>
    </source>
</evidence>
<evidence type="ECO:0000255" key="2">
    <source>
        <dbReference type="PROSITE-ProRule" id="PRU01126"/>
    </source>
</evidence>
<name>MSRB_LACLM</name>
<accession>A2RHS0</accession>
<gene>
    <name evidence="1" type="primary">msrB</name>
    <name type="ordered locus">llmg_0201</name>
</gene>
<reference key="1">
    <citation type="journal article" date="2007" name="J. Bacteriol.">
        <title>The complete genome sequence of the lactic acid bacterial paradigm Lactococcus lactis subsp. cremoris MG1363.</title>
        <authorList>
            <person name="Wegmann U."/>
            <person name="O'Connell-Motherway M."/>
            <person name="Zomer A."/>
            <person name="Buist G."/>
            <person name="Shearman C."/>
            <person name="Canchaya C."/>
            <person name="Ventura M."/>
            <person name="Goesmann A."/>
            <person name="Gasson M.J."/>
            <person name="Kuipers O.P."/>
            <person name="van Sinderen D."/>
            <person name="Kok J."/>
        </authorList>
    </citation>
    <scope>NUCLEOTIDE SEQUENCE [LARGE SCALE GENOMIC DNA]</scope>
    <source>
        <strain>MG1363</strain>
    </source>
</reference>